<comment type="function">
    <text evidence="1">Catalyzes the phosphorylation of pantothenate (Pan), the first step in CoA biosynthesis.</text>
</comment>
<comment type="catalytic activity">
    <reaction evidence="1">
        <text>(R)-pantothenate + ATP = (R)-4'-phosphopantothenate + ADP + H(+)</text>
        <dbReference type="Rhea" id="RHEA:16373"/>
        <dbReference type="ChEBI" id="CHEBI:10986"/>
        <dbReference type="ChEBI" id="CHEBI:15378"/>
        <dbReference type="ChEBI" id="CHEBI:29032"/>
        <dbReference type="ChEBI" id="CHEBI:30616"/>
        <dbReference type="ChEBI" id="CHEBI:456216"/>
        <dbReference type="EC" id="2.7.1.33"/>
    </reaction>
</comment>
<comment type="cofactor">
    <cofactor evidence="1">
        <name>NH4(+)</name>
        <dbReference type="ChEBI" id="CHEBI:28938"/>
    </cofactor>
    <cofactor evidence="1">
        <name>K(+)</name>
        <dbReference type="ChEBI" id="CHEBI:29103"/>
    </cofactor>
    <text evidence="1">A monovalent cation. Ammonium or potassium.</text>
</comment>
<comment type="pathway">
    <text evidence="1">Cofactor biosynthesis; coenzyme A biosynthesis; CoA from (R)-pantothenate: step 1/5.</text>
</comment>
<comment type="subunit">
    <text evidence="1">Homodimer.</text>
</comment>
<comment type="subcellular location">
    <subcellularLocation>
        <location evidence="1">Cytoplasm</location>
    </subcellularLocation>
</comment>
<comment type="similarity">
    <text evidence="1">Belongs to the type III pantothenate kinase family.</text>
</comment>
<keyword id="KW-0067">ATP-binding</keyword>
<keyword id="KW-0173">Coenzyme A biosynthesis</keyword>
<keyword id="KW-0963">Cytoplasm</keyword>
<keyword id="KW-0418">Kinase</keyword>
<keyword id="KW-0479">Metal-binding</keyword>
<keyword id="KW-0547">Nucleotide-binding</keyword>
<keyword id="KW-0630">Potassium</keyword>
<keyword id="KW-1185">Reference proteome</keyword>
<keyword id="KW-0808">Transferase</keyword>
<reference key="1">
    <citation type="journal article" date="2002" name="Environ. Microbiol.">
        <title>Complete genome sequence and comparative analysis of the metabolically versatile Pseudomonas putida KT2440.</title>
        <authorList>
            <person name="Nelson K.E."/>
            <person name="Weinel C."/>
            <person name="Paulsen I.T."/>
            <person name="Dodson R.J."/>
            <person name="Hilbert H."/>
            <person name="Martins dos Santos V.A.P."/>
            <person name="Fouts D.E."/>
            <person name="Gill S.R."/>
            <person name="Pop M."/>
            <person name="Holmes M."/>
            <person name="Brinkac L.M."/>
            <person name="Beanan M.J."/>
            <person name="DeBoy R.T."/>
            <person name="Daugherty S.C."/>
            <person name="Kolonay J.F."/>
            <person name="Madupu R."/>
            <person name="Nelson W.C."/>
            <person name="White O."/>
            <person name="Peterson J.D."/>
            <person name="Khouri H.M."/>
            <person name="Hance I."/>
            <person name="Chris Lee P."/>
            <person name="Holtzapple E.K."/>
            <person name="Scanlan D."/>
            <person name="Tran K."/>
            <person name="Moazzez A."/>
            <person name="Utterback T.R."/>
            <person name="Rizzo M."/>
            <person name="Lee K."/>
            <person name="Kosack D."/>
            <person name="Moestl D."/>
            <person name="Wedler H."/>
            <person name="Lauber J."/>
            <person name="Stjepandic D."/>
            <person name="Hoheisel J."/>
            <person name="Straetz M."/>
            <person name="Heim S."/>
            <person name="Kiewitz C."/>
            <person name="Eisen J.A."/>
            <person name="Timmis K.N."/>
            <person name="Duesterhoeft A."/>
            <person name="Tuemmler B."/>
            <person name="Fraser C.M."/>
        </authorList>
    </citation>
    <scope>NUCLEOTIDE SEQUENCE [LARGE SCALE GENOMIC DNA]</scope>
    <source>
        <strain>ATCC 47054 / DSM 6125 / CFBP 8728 / NCIMB 11950 / KT2440</strain>
    </source>
</reference>
<sequence length="249" mass="26731">MILELDCGNSFIKWRVIHVADAVIEGGGIVDSDQALVAEVAALASVRLTGCRIVSVRSEEETDALCALIAQAFAVQAKVAHPVREMAGVRNGYDDYQRLGMDRWLAALGAFHLAKGACLVIDLGTAAKADFVSADGEHLGGYICPGMPLMRSQLRTHTRRIRYDDASAERALSSLSPGRSTVEAVERGCVLMLQGFAYTQLEQARVLWGEEFTVFLTGGDAPLVRAALPQARVVPDLVFVGLAMACPLD</sequence>
<accession>Q88QQ0</accession>
<proteinExistence type="inferred from homology"/>
<name>COAX_PSEPK</name>
<organism>
    <name type="scientific">Pseudomonas putida (strain ATCC 47054 / DSM 6125 / CFBP 8728 / NCIMB 11950 / KT2440)</name>
    <dbReference type="NCBI Taxonomy" id="160488"/>
    <lineage>
        <taxon>Bacteria</taxon>
        <taxon>Pseudomonadati</taxon>
        <taxon>Pseudomonadota</taxon>
        <taxon>Gammaproteobacteria</taxon>
        <taxon>Pseudomonadales</taxon>
        <taxon>Pseudomonadaceae</taxon>
        <taxon>Pseudomonas</taxon>
    </lineage>
</organism>
<dbReference type="EC" id="2.7.1.33" evidence="1"/>
<dbReference type="EMBL" id="AE015451">
    <property type="protein sequence ID" value="AAN66068.1"/>
    <property type="molecule type" value="Genomic_DNA"/>
</dbReference>
<dbReference type="RefSeq" id="NP_742604.1">
    <property type="nucleotide sequence ID" value="NC_002947.4"/>
</dbReference>
<dbReference type="RefSeq" id="WP_010951771.1">
    <property type="nucleotide sequence ID" value="NZ_CP169744.1"/>
</dbReference>
<dbReference type="SMR" id="Q88QQ0"/>
<dbReference type="STRING" id="160488.PP_0438"/>
<dbReference type="PaxDb" id="160488-PP_0438"/>
<dbReference type="KEGG" id="ppu:PP_0438"/>
<dbReference type="PATRIC" id="fig|160488.4.peg.469"/>
<dbReference type="eggNOG" id="COG1521">
    <property type="taxonomic scope" value="Bacteria"/>
</dbReference>
<dbReference type="HOGENOM" id="CLU_066627_0_1_6"/>
<dbReference type="OrthoDB" id="9781305at2"/>
<dbReference type="PhylomeDB" id="Q88QQ0"/>
<dbReference type="BioCyc" id="PPUT160488:G1G01-477-MONOMER"/>
<dbReference type="UniPathway" id="UPA00241">
    <property type="reaction ID" value="UER00352"/>
</dbReference>
<dbReference type="Proteomes" id="UP000000556">
    <property type="component" value="Chromosome"/>
</dbReference>
<dbReference type="GO" id="GO:0005737">
    <property type="term" value="C:cytoplasm"/>
    <property type="evidence" value="ECO:0007669"/>
    <property type="project" value="UniProtKB-SubCell"/>
</dbReference>
<dbReference type="GO" id="GO:0005524">
    <property type="term" value="F:ATP binding"/>
    <property type="evidence" value="ECO:0007669"/>
    <property type="project" value="UniProtKB-UniRule"/>
</dbReference>
<dbReference type="GO" id="GO:0046872">
    <property type="term" value="F:metal ion binding"/>
    <property type="evidence" value="ECO:0007669"/>
    <property type="project" value="UniProtKB-KW"/>
</dbReference>
<dbReference type="GO" id="GO:0004594">
    <property type="term" value="F:pantothenate kinase activity"/>
    <property type="evidence" value="ECO:0007669"/>
    <property type="project" value="UniProtKB-UniRule"/>
</dbReference>
<dbReference type="GO" id="GO:0015937">
    <property type="term" value="P:coenzyme A biosynthetic process"/>
    <property type="evidence" value="ECO:0007669"/>
    <property type="project" value="UniProtKB-UniRule"/>
</dbReference>
<dbReference type="CDD" id="cd24015">
    <property type="entry name" value="ASKHA_NBD_PanK-III"/>
    <property type="match status" value="1"/>
</dbReference>
<dbReference type="Gene3D" id="3.30.420.40">
    <property type="match status" value="2"/>
</dbReference>
<dbReference type="HAMAP" id="MF_01274">
    <property type="entry name" value="Pantothen_kinase_3"/>
    <property type="match status" value="1"/>
</dbReference>
<dbReference type="InterPro" id="IPR043129">
    <property type="entry name" value="ATPase_NBD"/>
</dbReference>
<dbReference type="InterPro" id="IPR004619">
    <property type="entry name" value="Type_III_PanK"/>
</dbReference>
<dbReference type="NCBIfam" id="TIGR00671">
    <property type="entry name" value="baf"/>
    <property type="match status" value="1"/>
</dbReference>
<dbReference type="NCBIfam" id="NF009857">
    <property type="entry name" value="PRK13322.1-2"/>
    <property type="match status" value="1"/>
</dbReference>
<dbReference type="NCBIfam" id="NF009859">
    <property type="entry name" value="PRK13322.1-4"/>
    <property type="match status" value="1"/>
</dbReference>
<dbReference type="PANTHER" id="PTHR34265">
    <property type="entry name" value="TYPE III PANTOTHENATE KINASE"/>
    <property type="match status" value="1"/>
</dbReference>
<dbReference type="PANTHER" id="PTHR34265:SF1">
    <property type="entry name" value="TYPE III PANTOTHENATE KINASE"/>
    <property type="match status" value="1"/>
</dbReference>
<dbReference type="Pfam" id="PF03309">
    <property type="entry name" value="Pan_kinase"/>
    <property type="match status" value="1"/>
</dbReference>
<dbReference type="SUPFAM" id="SSF53067">
    <property type="entry name" value="Actin-like ATPase domain"/>
    <property type="match status" value="2"/>
</dbReference>
<gene>
    <name evidence="1" type="primary">coaX</name>
    <name type="ordered locus">PP_0438</name>
</gene>
<feature type="chain" id="PRO_0000267577" description="Type III pantothenate kinase">
    <location>
        <begin position="1"/>
        <end position="249"/>
    </location>
</feature>
<feature type="active site" description="Proton acceptor" evidence="1">
    <location>
        <position position="102"/>
    </location>
</feature>
<feature type="binding site" evidence="1">
    <location>
        <begin position="6"/>
        <end position="13"/>
    </location>
    <ligand>
        <name>ATP</name>
        <dbReference type="ChEBI" id="CHEBI:30616"/>
    </ligand>
</feature>
<feature type="binding site" evidence="1">
    <location>
        <position position="93"/>
    </location>
    <ligand>
        <name>substrate</name>
    </ligand>
</feature>
<feature type="binding site" evidence="1">
    <location>
        <begin position="100"/>
        <end position="103"/>
    </location>
    <ligand>
        <name>substrate</name>
    </ligand>
</feature>
<feature type="binding site" evidence="1">
    <location>
        <position position="122"/>
    </location>
    <ligand>
        <name>K(+)</name>
        <dbReference type="ChEBI" id="CHEBI:29103"/>
    </ligand>
</feature>
<feature type="binding site" evidence="1">
    <location>
        <position position="125"/>
    </location>
    <ligand>
        <name>ATP</name>
        <dbReference type="ChEBI" id="CHEBI:30616"/>
    </ligand>
</feature>
<feature type="binding site" evidence="1">
    <location>
        <position position="181"/>
    </location>
    <ligand>
        <name>substrate</name>
    </ligand>
</feature>
<protein>
    <recommendedName>
        <fullName evidence="1">Type III pantothenate kinase</fullName>
        <ecNumber evidence="1">2.7.1.33</ecNumber>
    </recommendedName>
    <alternativeName>
        <fullName evidence="1">PanK-III</fullName>
    </alternativeName>
    <alternativeName>
        <fullName evidence="1">Pantothenic acid kinase</fullName>
    </alternativeName>
</protein>
<evidence type="ECO:0000255" key="1">
    <source>
        <dbReference type="HAMAP-Rule" id="MF_01274"/>
    </source>
</evidence>